<keyword id="KW-0963">Cytoplasm</keyword>
<keyword id="KW-0369">Histidine metabolism</keyword>
<keyword id="KW-0456">Lyase</keyword>
<keyword id="KW-0520">NAD</keyword>
<keyword id="KW-1185">Reference proteome</keyword>
<accession>A8HA92</accession>
<comment type="function">
    <text evidence="1">Catalyzes the conversion of urocanate to 4-imidazolone-5-propionate.</text>
</comment>
<comment type="catalytic activity">
    <reaction evidence="1">
        <text>4-imidazolone-5-propanoate = trans-urocanate + H2O</text>
        <dbReference type="Rhea" id="RHEA:13101"/>
        <dbReference type="ChEBI" id="CHEBI:15377"/>
        <dbReference type="ChEBI" id="CHEBI:17771"/>
        <dbReference type="ChEBI" id="CHEBI:77893"/>
        <dbReference type="EC" id="4.2.1.49"/>
    </reaction>
</comment>
<comment type="cofactor">
    <cofactor evidence="1">
        <name>NAD(+)</name>
        <dbReference type="ChEBI" id="CHEBI:57540"/>
    </cofactor>
    <text evidence="1">Binds 1 NAD(+) per subunit.</text>
</comment>
<comment type="pathway">
    <text evidence="1">Amino-acid degradation; L-histidine degradation into L-glutamate; N-formimidoyl-L-glutamate from L-histidine: step 2/3.</text>
</comment>
<comment type="subcellular location">
    <subcellularLocation>
        <location evidence="1">Cytoplasm</location>
    </subcellularLocation>
</comment>
<comment type="similarity">
    <text evidence="1">Belongs to the urocanase family.</text>
</comment>
<proteinExistence type="inferred from homology"/>
<protein>
    <recommendedName>
        <fullName evidence="1">Urocanate hydratase</fullName>
        <shortName evidence="1">Urocanase</shortName>
        <ecNumber evidence="1">4.2.1.49</ecNumber>
    </recommendedName>
    <alternativeName>
        <fullName evidence="1">Imidazolonepropionate hydrolase</fullName>
    </alternativeName>
</protein>
<feature type="chain" id="PRO_1000082356" description="Urocanate hydratase">
    <location>
        <begin position="1"/>
        <end position="562"/>
    </location>
</feature>
<feature type="active site" evidence="1">
    <location>
        <position position="410"/>
    </location>
</feature>
<feature type="binding site" evidence="1">
    <location>
        <begin position="52"/>
        <end position="53"/>
    </location>
    <ligand>
        <name>NAD(+)</name>
        <dbReference type="ChEBI" id="CHEBI:57540"/>
    </ligand>
</feature>
<feature type="binding site" evidence="1">
    <location>
        <position position="130"/>
    </location>
    <ligand>
        <name>NAD(+)</name>
        <dbReference type="ChEBI" id="CHEBI:57540"/>
    </ligand>
</feature>
<feature type="binding site" evidence="1">
    <location>
        <begin position="176"/>
        <end position="178"/>
    </location>
    <ligand>
        <name>NAD(+)</name>
        <dbReference type="ChEBI" id="CHEBI:57540"/>
    </ligand>
</feature>
<feature type="binding site" evidence="1">
    <location>
        <position position="196"/>
    </location>
    <ligand>
        <name>NAD(+)</name>
        <dbReference type="ChEBI" id="CHEBI:57540"/>
    </ligand>
</feature>
<feature type="binding site" evidence="1">
    <location>
        <position position="201"/>
    </location>
    <ligand>
        <name>NAD(+)</name>
        <dbReference type="ChEBI" id="CHEBI:57540"/>
    </ligand>
</feature>
<feature type="binding site" evidence="1">
    <location>
        <begin position="242"/>
        <end position="243"/>
    </location>
    <ligand>
        <name>NAD(+)</name>
        <dbReference type="ChEBI" id="CHEBI:57540"/>
    </ligand>
</feature>
<feature type="binding site" evidence="1">
    <location>
        <begin position="263"/>
        <end position="267"/>
    </location>
    <ligand>
        <name>NAD(+)</name>
        <dbReference type="ChEBI" id="CHEBI:57540"/>
    </ligand>
</feature>
<feature type="binding site" evidence="1">
    <location>
        <begin position="273"/>
        <end position="274"/>
    </location>
    <ligand>
        <name>NAD(+)</name>
        <dbReference type="ChEBI" id="CHEBI:57540"/>
    </ligand>
</feature>
<feature type="binding site" evidence="1">
    <location>
        <position position="322"/>
    </location>
    <ligand>
        <name>NAD(+)</name>
        <dbReference type="ChEBI" id="CHEBI:57540"/>
    </ligand>
</feature>
<feature type="binding site" evidence="1">
    <location>
        <position position="492"/>
    </location>
    <ligand>
        <name>NAD(+)</name>
        <dbReference type="ChEBI" id="CHEBI:57540"/>
    </ligand>
</feature>
<name>HUTU_SHEPA</name>
<dbReference type="EC" id="4.2.1.49" evidence="1"/>
<dbReference type="EMBL" id="CP000851">
    <property type="protein sequence ID" value="ABV89479.1"/>
    <property type="molecule type" value="Genomic_DNA"/>
</dbReference>
<dbReference type="RefSeq" id="WP_012157357.1">
    <property type="nucleotide sequence ID" value="NC_009901.1"/>
</dbReference>
<dbReference type="SMR" id="A8HA92"/>
<dbReference type="STRING" id="398579.Spea_4169"/>
<dbReference type="KEGG" id="spl:Spea_4169"/>
<dbReference type="eggNOG" id="COG2987">
    <property type="taxonomic scope" value="Bacteria"/>
</dbReference>
<dbReference type="HOGENOM" id="CLU_018868_0_1_6"/>
<dbReference type="OrthoDB" id="9764874at2"/>
<dbReference type="UniPathway" id="UPA00379">
    <property type="reaction ID" value="UER00550"/>
</dbReference>
<dbReference type="Proteomes" id="UP000002608">
    <property type="component" value="Chromosome"/>
</dbReference>
<dbReference type="GO" id="GO:0005737">
    <property type="term" value="C:cytoplasm"/>
    <property type="evidence" value="ECO:0007669"/>
    <property type="project" value="UniProtKB-SubCell"/>
</dbReference>
<dbReference type="GO" id="GO:0016153">
    <property type="term" value="F:urocanate hydratase activity"/>
    <property type="evidence" value="ECO:0007669"/>
    <property type="project" value="UniProtKB-UniRule"/>
</dbReference>
<dbReference type="GO" id="GO:0019556">
    <property type="term" value="P:L-histidine catabolic process to glutamate and formamide"/>
    <property type="evidence" value="ECO:0007669"/>
    <property type="project" value="UniProtKB-UniPathway"/>
</dbReference>
<dbReference type="GO" id="GO:0019557">
    <property type="term" value="P:L-histidine catabolic process to glutamate and formate"/>
    <property type="evidence" value="ECO:0007669"/>
    <property type="project" value="UniProtKB-UniPathway"/>
</dbReference>
<dbReference type="FunFam" id="3.40.50.10730:FF:000001">
    <property type="entry name" value="Urocanate hydratase"/>
    <property type="match status" value="1"/>
</dbReference>
<dbReference type="Gene3D" id="3.40.50.10730">
    <property type="entry name" value="Urocanase like domains"/>
    <property type="match status" value="1"/>
</dbReference>
<dbReference type="Gene3D" id="3.40.1770.10">
    <property type="entry name" value="Urocanase superfamily"/>
    <property type="match status" value="1"/>
</dbReference>
<dbReference type="HAMAP" id="MF_00577">
    <property type="entry name" value="HutU"/>
    <property type="match status" value="1"/>
</dbReference>
<dbReference type="InterPro" id="IPR055351">
    <property type="entry name" value="Urocanase"/>
</dbReference>
<dbReference type="InterPro" id="IPR023637">
    <property type="entry name" value="Urocanase-like"/>
</dbReference>
<dbReference type="InterPro" id="IPR035401">
    <property type="entry name" value="Urocanase_C"/>
</dbReference>
<dbReference type="InterPro" id="IPR038364">
    <property type="entry name" value="Urocanase_central_sf"/>
</dbReference>
<dbReference type="InterPro" id="IPR023636">
    <property type="entry name" value="Urocanase_CS"/>
</dbReference>
<dbReference type="InterPro" id="IPR035400">
    <property type="entry name" value="Urocanase_N"/>
</dbReference>
<dbReference type="InterPro" id="IPR035085">
    <property type="entry name" value="Urocanase_Rossmann-like"/>
</dbReference>
<dbReference type="InterPro" id="IPR036190">
    <property type="entry name" value="Urocanase_sf"/>
</dbReference>
<dbReference type="NCBIfam" id="TIGR01228">
    <property type="entry name" value="hutU"/>
    <property type="match status" value="1"/>
</dbReference>
<dbReference type="NCBIfam" id="NF003820">
    <property type="entry name" value="PRK05414.1"/>
    <property type="match status" value="1"/>
</dbReference>
<dbReference type="PANTHER" id="PTHR12216">
    <property type="entry name" value="UROCANATE HYDRATASE"/>
    <property type="match status" value="1"/>
</dbReference>
<dbReference type="PANTHER" id="PTHR12216:SF4">
    <property type="entry name" value="UROCANATE HYDRATASE"/>
    <property type="match status" value="1"/>
</dbReference>
<dbReference type="Pfam" id="PF01175">
    <property type="entry name" value="Urocanase"/>
    <property type="match status" value="1"/>
</dbReference>
<dbReference type="Pfam" id="PF17392">
    <property type="entry name" value="Urocanase_C"/>
    <property type="match status" value="1"/>
</dbReference>
<dbReference type="Pfam" id="PF17391">
    <property type="entry name" value="Urocanase_N"/>
    <property type="match status" value="1"/>
</dbReference>
<dbReference type="PIRSF" id="PIRSF001423">
    <property type="entry name" value="Urocanate_hydrat"/>
    <property type="match status" value="1"/>
</dbReference>
<dbReference type="SUPFAM" id="SSF111326">
    <property type="entry name" value="Urocanase"/>
    <property type="match status" value="1"/>
</dbReference>
<dbReference type="PROSITE" id="PS01233">
    <property type="entry name" value="UROCANASE"/>
    <property type="match status" value="1"/>
</dbReference>
<evidence type="ECO:0000255" key="1">
    <source>
        <dbReference type="HAMAP-Rule" id="MF_00577"/>
    </source>
</evidence>
<sequence length="562" mass="61075">MDKRHDPSRRIIAPTGTELSCKSWLTEAPLRMLMNNLHPDVAERPEDLVVYGGIGRAARDWECYDKIVEVLQRLEEDETLLVQSGKPVGVFKTHNNAPRVIIANSNLVPHWANWEHFNELDKKGLAMYGQMTAGSWIYIGSQGIVQGTYETFVAMAKQHFNGSSAGKWILTGGLGGMGGAQPLAGTMAGYSVLTCEVDETRIDFRLRTKYVDKKATTLDEALAMIDEANKSGKPVSVGLLANAADVFAELVERGITPDVVTDQTSAHDPLNGYLPQGWTLEQAIEMRKTDEAAVVKAAKQSMAVQVKAMLALQAAGAATTDYGNNIRQMAFEEGVENAFDFPGFVPAYVRPLFCEGIGPFRWVALSGDPEDIYKTDAKVKELIPDNPHLHNWLDMARERIAFQGLPSRICWVGLKDRARLALAFNEMVKNGELSAPVVIGRDHLDSGSVASPNRETESMLDGSDAVSDWPLMNALLNTASGATWVSLHHGGGVGMGFSQHSGVVIVADGTDDAAARLGRVLWNDPATGVMRHADAGYDIAKNCAKEQGLDLPMLEKATTEGK</sequence>
<organism>
    <name type="scientific">Shewanella pealeana (strain ATCC 700345 / ANG-SQ1)</name>
    <dbReference type="NCBI Taxonomy" id="398579"/>
    <lineage>
        <taxon>Bacteria</taxon>
        <taxon>Pseudomonadati</taxon>
        <taxon>Pseudomonadota</taxon>
        <taxon>Gammaproteobacteria</taxon>
        <taxon>Alteromonadales</taxon>
        <taxon>Shewanellaceae</taxon>
        <taxon>Shewanella</taxon>
    </lineage>
</organism>
<reference key="1">
    <citation type="submission" date="2007-10" db="EMBL/GenBank/DDBJ databases">
        <title>Complete sequence of Shewanella pealeana ATCC 700345.</title>
        <authorList>
            <consortium name="US DOE Joint Genome Institute"/>
            <person name="Copeland A."/>
            <person name="Lucas S."/>
            <person name="Lapidus A."/>
            <person name="Barry K."/>
            <person name="Glavina del Rio T."/>
            <person name="Dalin E."/>
            <person name="Tice H."/>
            <person name="Pitluck S."/>
            <person name="Chertkov O."/>
            <person name="Brettin T."/>
            <person name="Bruce D."/>
            <person name="Detter J.C."/>
            <person name="Han C."/>
            <person name="Schmutz J."/>
            <person name="Larimer F."/>
            <person name="Land M."/>
            <person name="Hauser L."/>
            <person name="Kyrpides N."/>
            <person name="Kim E."/>
            <person name="Zhao J.-S.Z."/>
            <person name="Manno D."/>
            <person name="Hawari J."/>
            <person name="Richardson P."/>
        </authorList>
    </citation>
    <scope>NUCLEOTIDE SEQUENCE [LARGE SCALE GENOMIC DNA]</scope>
    <source>
        <strain>ATCC 700345 / ANG-SQ1</strain>
    </source>
</reference>
<gene>
    <name evidence="1" type="primary">hutU</name>
    <name type="ordered locus">Spea_4169</name>
</gene>